<organism>
    <name type="scientific">Oryza sativa subsp. japonica</name>
    <name type="common">Rice</name>
    <dbReference type="NCBI Taxonomy" id="39947"/>
    <lineage>
        <taxon>Eukaryota</taxon>
        <taxon>Viridiplantae</taxon>
        <taxon>Streptophyta</taxon>
        <taxon>Embryophyta</taxon>
        <taxon>Tracheophyta</taxon>
        <taxon>Spermatophyta</taxon>
        <taxon>Magnoliopsida</taxon>
        <taxon>Liliopsida</taxon>
        <taxon>Poales</taxon>
        <taxon>Poaceae</taxon>
        <taxon>BOP clade</taxon>
        <taxon>Oryzoideae</taxon>
        <taxon>Oryzeae</taxon>
        <taxon>Oryzinae</taxon>
        <taxon>Oryza</taxon>
        <taxon>Oryza sativa</taxon>
    </lineage>
</organism>
<sequence>MLSVSCPRVYMSRKALDFGQLASCRCRWAGRSGMRVAPRRRMPCVCFVASPSQPGLAAVDVPAEAISSARTTTMIPERISVSSLLEVVSDDLLKLNNNLKSLVGAENPVLVSAAEQIFGAGGKRLRPALVFLVSRATAELAGLLELTTEHQRLAEIIEMIHTASLIHDDVIDDSGMRRGKETIHQLYGTRVAVLAGDFMFAQSSWFLANLENIEVIKLISQVIKDFASGEIKQASTLFDCDVTLDDYLLKSYYKTASLLASSTRSAAIFSGVSTTICEQMYEYGRNLGLSFQVVDDILDFTQSAEQLGKPAGSDLAKGNLTAPVIFALQDEPKLREIIDSEFSESDSLATAIDLVHRSGGIRRAQELAKEKGDLALQNLQCLPKSQFRSTLENVVKYNLQRID</sequence>
<feature type="transit peptide" description="Chloroplast" evidence="5">
    <location>
        <begin position="1"/>
        <end position="62"/>
    </location>
</feature>
<feature type="chain" id="PRO_0000414852" description="Solanesyl-diphosphate synthase 2, chloroplastic">
    <location>
        <begin position="63"/>
        <end position="403"/>
    </location>
</feature>
<feature type="binding site" evidence="2">
    <location>
        <position position="123"/>
    </location>
    <ligand>
        <name>isopentenyl diphosphate</name>
        <dbReference type="ChEBI" id="CHEBI:128769"/>
    </ligand>
</feature>
<feature type="binding site" evidence="2">
    <location>
        <position position="126"/>
    </location>
    <ligand>
        <name>isopentenyl diphosphate</name>
        <dbReference type="ChEBI" id="CHEBI:128769"/>
    </ligand>
</feature>
<feature type="binding site" evidence="3">
    <location>
        <position position="161"/>
    </location>
    <ligand>
        <name>isopentenyl diphosphate</name>
        <dbReference type="ChEBI" id="CHEBI:128769"/>
    </ligand>
</feature>
<feature type="binding site" evidence="2">
    <location>
        <position position="168"/>
    </location>
    <ligand>
        <name>Mg(2+)</name>
        <dbReference type="ChEBI" id="CHEBI:18420"/>
        <label>1</label>
    </ligand>
</feature>
<feature type="binding site" evidence="2">
    <location>
        <position position="168"/>
    </location>
    <ligand>
        <name>Mg(2+)</name>
        <dbReference type="ChEBI" id="CHEBI:18420"/>
        <label>2</label>
    </ligand>
</feature>
<feature type="binding site" evidence="2">
    <location>
        <position position="172"/>
    </location>
    <ligand>
        <name>Mg(2+)</name>
        <dbReference type="ChEBI" id="CHEBI:18420"/>
        <label>1</label>
    </ligand>
</feature>
<feature type="binding site" evidence="2">
    <location>
        <position position="172"/>
    </location>
    <ligand>
        <name>Mg(2+)</name>
        <dbReference type="ChEBI" id="CHEBI:18420"/>
        <label>2</label>
    </ligand>
</feature>
<feature type="binding site" evidence="1">
    <location>
        <position position="177"/>
    </location>
    <ligand>
        <name>an all-trans-polyprenyl diphosphate</name>
        <dbReference type="ChEBI" id="CHEBI:58914"/>
    </ligand>
</feature>
<feature type="binding site" evidence="2">
    <location>
        <position position="178"/>
    </location>
    <ligand>
        <name>isopentenyl diphosphate</name>
        <dbReference type="ChEBI" id="CHEBI:128769"/>
    </ligand>
</feature>
<feature type="binding site" evidence="1">
    <location>
        <position position="254"/>
    </location>
    <ligand>
        <name>an all-trans-polyprenyl diphosphate</name>
        <dbReference type="ChEBI" id="CHEBI:58914"/>
    </ligand>
</feature>
<feature type="binding site" evidence="1">
    <location>
        <position position="255"/>
    </location>
    <ligand>
        <name>an all-trans-polyprenyl diphosphate</name>
        <dbReference type="ChEBI" id="CHEBI:58914"/>
    </ligand>
</feature>
<feature type="binding site" evidence="1">
    <location>
        <position position="292"/>
    </location>
    <ligand>
        <name>an all-trans-polyprenyl diphosphate</name>
        <dbReference type="ChEBI" id="CHEBI:58914"/>
    </ligand>
</feature>
<feature type="binding site" evidence="1">
    <location>
        <position position="309"/>
    </location>
    <ligand>
        <name>an all-trans-polyprenyl diphosphate</name>
        <dbReference type="ChEBI" id="CHEBI:58914"/>
    </ligand>
</feature>
<evidence type="ECO:0000250" key="1"/>
<evidence type="ECO:0000250" key="2">
    <source>
        <dbReference type="UniProtKB" id="P14324"/>
    </source>
</evidence>
<evidence type="ECO:0000250" key="3">
    <source>
        <dbReference type="UniProtKB" id="Q12051"/>
    </source>
</evidence>
<evidence type="ECO:0000250" key="4">
    <source>
        <dbReference type="UniProtKB" id="Q5HZ00"/>
    </source>
</evidence>
<evidence type="ECO:0000255" key="5"/>
<evidence type="ECO:0000269" key="6">
    <source>
    </source>
</evidence>
<evidence type="ECO:0000269" key="7">
    <source>
    </source>
</evidence>
<evidence type="ECO:0000303" key="8">
    <source>
    </source>
</evidence>
<evidence type="ECO:0000305" key="9"/>
<evidence type="ECO:0000312" key="10">
    <source>
        <dbReference type="EMBL" id="AAS16899.2"/>
    </source>
</evidence>
<evidence type="ECO:0000312" key="11">
    <source>
        <dbReference type="EMBL" id="AAT44203.1"/>
    </source>
</evidence>
<evidence type="ECO:0000312" key="12">
    <source>
        <dbReference type="EMBL" id="BAS95534.1"/>
    </source>
</evidence>
<evidence type="ECO:0000312" key="13">
    <source>
        <dbReference type="EMBL" id="EEE64831.1"/>
    </source>
</evidence>
<protein>
    <recommendedName>
        <fullName evidence="8">Solanesyl-diphosphate synthase 2, chloroplastic</fullName>
        <shortName evidence="8">OsSPS2</shortName>
        <ecNumber evidence="6">2.5.1.84</ecNumber>
    </recommendedName>
    <alternativeName>
        <fullName evidence="9">All-trans-nonaprenyl-diphosphate synthase 2 (geranyl-diphosphate specific)</fullName>
    </alternativeName>
</protein>
<keyword id="KW-0150">Chloroplast</keyword>
<keyword id="KW-0414">Isoprene biosynthesis</keyword>
<keyword id="KW-0460">Magnesium</keyword>
<keyword id="KW-0479">Metal-binding</keyword>
<keyword id="KW-0934">Plastid</keyword>
<keyword id="KW-1185">Reference proteome</keyword>
<keyword id="KW-0808">Transferase</keyword>
<keyword id="KW-0809">Transit peptide</keyword>
<reference key="1">
    <citation type="journal article" date="2005" name="Mol. Genet. Genomics">
        <title>A fine physical map of the rice chromosome 5.</title>
        <authorList>
            <person name="Cheng C.-H."/>
            <person name="Chung M.C."/>
            <person name="Liu S.-M."/>
            <person name="Chen S.-K."/>
            <person name="Kao F.Y."/>
            <person name="Lin S.-J."/>
            <person name="Hsiao S.-H."/>
            <person name="Tseng I.C."/>
            <person name="Hsing Y.-I.C."/>
            <person name="Wu H.-P."/>
            <person name="Chen C.-S."/>
            <person name="Shaw J.-F."/>
            <person name="Wu J."/>
            <person name="Matsumoto T."/>
            <person name="Sasaki T."/>
            <person name="Chen H.-C."/>
            <person name="Chow T.-Y."/>
        </authorList>
    </citation>
    <scope>NUCLEOTIDE SEQUENCE [LARGE SCALE GENOMIC DNA]</scope>
    <source>
        <strain>cv. Nipponbare</strain>
    </source>
</reference>
<reference key="2">
    <citation type="journal article" date="2005" name="Nature">
        <title>The map-based sequence of the rice genome.</title>
        <authorList>
            <consortium name="International rice genome sequencing project (IRGSP)"/>
        </authorList>
    </citation>
    <scope>NUCLEOTIDE SEQUENCE [LARGE SCALE GENOMIC DNA]</scope>
    <source>
        <strain>cv. Nipponbare</strain>
    </source>
</reference>
<reference key="3">
    <citation type="journal article" date="2008" name="Nucleic Acids Res.">
        <title>The rice annotation project database (RAP-DB): 2008 update.</title>
        <authorList>
            <consortium name="The rice annotation project (RAP)"/>
        </authorList>
    </citation>
    <scope>GENOME REANNOTATION</scope>
    <source>
        <strain>cv. Nipponbare</strain>
    </source>
</reference>
<reference key="4">
    <citation type="journal article" date="2013" name="Rice">
        <title>Improvement of the Oryza sativa Nipponbare reference genome using next generation sequence and optical map data.</title>
        <authorList>
            <person name="Kawahara Y."/>
            <person name="de la Bastide M."/>
            <person name="Hamilton J.P."/>
            <person name="Kanamori H."/>
            <person name="McCombie W.R."/>
            <person name="Ouyang S."/>
            <person name="Schwartz D.C."/>
            <person name="Tanaka T."/>
            <person name="Wu J."/>
            <person name="Zhou S."/>
            <person name="Childs K.L."/>
            <person name="Davidson R.M."/>
            <person name="Lin H."/>
            <person name="Quesada-Ocampo L."/>
            <person name="Vaillancourt B."/>
            <person name="Sakai H."/>
            <person name="Lee S.S."/>
            <person name="Kim J."/>
            <person name="Numa H."/>
            <person name="Itoh T."/>
            <person name="Buell C.R."/>
            <person name="Matsumoto T."/>
        </authorList>
    </citation>
    <scope>GENOME REANNOTATION</scope>
    <source>
        <strain>cv. Nipponbare</strain>
    </source>
</reference>
<reference key="5">
    <citation type="journal article" date="2005" name="PLoS Biol.">
        <title>The genomes of Oryza sativa: a history of duplications.</title>
        <authorList>
            <person name="Yu J."/>
            <person name="Wang J."/>
            <person name="Lin W."/>
            <person name="Li S."/>
            <person name="Li H."/>
            <person name="Zhou J."/>
            <person name="Ni P."/>
            <person name="Dong W."/>
            <person name="Hu S."/>
            <person name="Zeng C."/>
            <person name="Zhang J."/>
            <person name="Zhang Y."/>
            <person name="Li R."/>
            <person name="Xu Z."/>
            <person name="Li S."/>
            <person name="Li X."/>
            <person name="Zheng H."/>
            <person name="Cong L."/>
            <person name="Lin L."/>
            <person name="Yin J."/>
            <person name="Geng J."/>
            <person name="Li G."/>
            <person name="Shi J."/>
            <person name="Liu J."/>
            <person name="Lv H."/>
            <person name="Li J."/>
            <person name="Wang J."/>
            <person name="Deng Y."/>
            <person name="Ran L."/>
            <person name="Shi X."/>
            <person name="Wang X."/>
            <person name="Wu Q."/>
            <person name="Li C."/>
            <person name="Ren X."/>
            <person name="Wang J."/>
            <person name="Wang X."/>
            <person name="Li D."/>
            <person name="Liu D."/>
            <person name="Zhang X."/>
            <person name="Ji Z."/>
            <person name="Zhao W."/>
            <person name="Sun Y."/>
            <person name="Zhang Z."/>
            <person name="Bao J."/>
            <person name="Han Y."/>
            <person name="Dong L."/>
            <person name="Ji J."/>
            <person name="Chen P."/>
            <person name="Wu S."/>
            <person name="Liu J."/>
            <person name="Xiao Y."/>
            <person name="Bu D."/>
            <person name="Tan J."/>
            <person name="Yang L."/>
            <person name="Ye C."/>
            <person name="Zhang J."/>
            <person name="Xu J."/>
            <person name="Zhou Y."/>
            <person name="Yu Y."/>
            <person name="Zhang B."/>
            <person name="Zhuang S."/>
            <person name="Wei H."/>
            <person name="Liu B."/>
            <person name="Lei M."/>
            <person name="Yu H."/>
            <person name="Li Y."/>
            <person name="Xu H."/>
            <person name="Wei S."/>
            <person name="He X."/>
            <person name="Fang L."/>
            <person name="Zhang Z."/>
            <person name="Zhang Y."/>
            <person name="Huang X."/>
            <person name="Su Z."/>
            <person name="Tong W."/>
            <person name="Li J."/>
            <person name="Tong Z."/>
            <person name="Li S."/>
            <person name="Ye J."/>
            <person name="Wang L."/>
            <person name="Fang L."/>
            <person name="Lei T."/>
            <person name="Chen C.-S."/>
            <person name="Chen H.-C."/>
            <person name="Xu Z."/>
            <person name="Li H."/>
            <person name="Huang H."/>
            <person name="Zhang F."/>
            <person name="Xu H."/>
            <person name="Li N."/>
            <person name="Zhao C."/>
            <person name="Li S."/>
            <person name="Dong L."/>
            <person name="Huang Y."/>
            <person name="Li L."/>
            <person name="Xi Y."/>
            <person name="Qi Q."/>
            <person name="Li W."/>
            <person name="Zhang B."/>
            <person name="Hu W."/>
            <person name="Zhang Y."/>
            <person name="Tian X."/>
            <person name="Jiao Y."/>
            <person name="Liang X."/>
            <person name="Jin J."/>
            <person name="Gao L."/>
            <person name="Zheng W."/>
            <person name="Hao B."/>
            <person name="Liu S.-M."/>
            <person name="Wang W."/>
            <person name="Yuan L."/>
            <person name="Cao M."/>
            <person name="McDermott J."/>
            <person name="Samudrala R."/>
            <person name="Wang J."/>
            <person name="Wong G.K.-S."/>
            <person name="Yang H."/>
        </authorList>
    </citation>
    <scope>NUCLEOTIDE SEQUENCE [LARGE SCALE GENOMIC DNA]</scope>
    <source>
        <strain>cv. Nipponbare</strain>
    </source>
</reference>
<reference key="6">
    <citation type="journal article" date="2003" name="Science">
        <title>Collection, mapping, and annotation of over 28,000 cDNA clones from japonica rice.</title>
        <authorList>
            <consortium name="The rice full-length cDNA consortium"/>
        </authorList>
    </citation>
    <scope>NUCLEOTIDE SEQUENCE [LARGE SCALE MRNA]</scope>
    <source>
        <strain>cv. Nipponbare</strain>
    </source>
</reference>
<reference key="7">
    <citation type="journal article" date="2010" name="J. Exp. Bot.">
        <title>Two solanesyl diphosphate synthases with different subcellular localizations and their respective physiological roles in Oryza sativa.</title>
        <authorList>
            <person name="Ohara K."/>
            <person name="Sasaki K."/>
            <person name="Yazaki K."/>
        </authorList>
    </citation>
    <scope>FUNCTION</scope>
    <scope>CATALYTIC ACTIVITY</scope>
    <scope>TISSUE SPECIFICITY</scope>
    <scope>SUBCELLULAR LOCATION</scope>
</reference>
<reference key="8">
    <citation type="journal article" date="2017" name="Front. Plant Sci.">
        <title>Conserved function of Fibrillin5 in the plastoquinone-9 biosynthetic pathway in Arabidopsis and rice.</title>
        <authorList>
            <person name="Kim E.H."/>
            <person name="Lee D.W."/>
            <person name="Lee K.R."/>
            <person name="Jung S.J."/>
            <person name="Jeon J.S."/>
            <person name="Kim H.U."/>
        </authorList>
    </citation>
    <scope>INTERACTION WITH FBN5</scope>
    <scope>SUBCELLULAR LOCATION</scope>
</reference>
<accession>Q75HZ9</accession>
<accession>A0A0P0WQS6</accession>
<accession>Q6L5D5</accession>
<proteinExistence type="evidence at protein level"/>
<name>SPS2_ORYSJ</name>
<dbReference type="EC" id="2.5.1.84" evidence="6"/>
<dbReference type="EMBL" id="AC098573">
    <property type="protein sequence ID" value="AAT44203.1"/>
    <property type="molecule type" value="Genomic_DNA"/>
</dbReference>
<dbReference type="EMBL" id="AC134929">
    <property type="protein sequence ID" value="AAS16899.2"/>
    <property type="molecule type" value="Genomic_DNA"/>
</dbReference>
<dbReference type="EMBL" id="AP008211">
    <property type="status" value="NOT_ANNOTATED_CDS"/>
    <property type="molecule type" value="Genomic_DNA"/>
</dbReference>
<dbReference type="EMBL" id="AP014961">
    <property type="protein sequence ID" value="BAS95534.1"/>
    <property type="status" value="ALT_SEQ"/>
    <property type="molecule type" value="Genomic_DNA"/>
</dbReference>
<dbReference type="EMBL" id="CM000142">
    <property type="protein sequence ID" value="EEE64831.1"/>
    <property type="molecule type" value="Genomic_DNA"/>
</dbReference>
<dbReference type="EMBL" id="AK066579">
    <property type="protein sequence ID" value="BAG90037.1"/>
    <property type="molecule type" value="mRNA"/>
</dbReference>
<dbReference type="RefSeq" id="XP_015639579.1">
    <property type="nucleotide sequence ID" value="XM_015784093.1"/>
</dbReference>
<dbReference type="SMR" id="Q75HZ9"/>
<dbReference type="FunCoup" id="Q75HZ9">
    <property type="interactions" value="89"/>
</dbReference>
<dbReference type="STRING" id="39947.Q75HZ9"/>
<dbReference type="PaxDb" id="39947-Q75HZ9"/>
<dbReference type="EnsemblPlants" id="Os05t0582300-01">
    <property type="protein sequence ID" value="Os05t0582300-01"/>
    <property type="gene ID" value="Os05g0582300"/>
</dbReference>
<dbReference type="Gramene" id="Os05t0582300-01">
    <property type="protein sequence ID" value="Os05t0582300-01"/>
    <property type="gene ID" value="Os05g0582300"/>
</dbReference>
<dbReference type="eggNOG" id="KOG0776">
    <property type="taxonomic scope" value="Eukaryota"/>
</dbReference>
<dbReference type="InParanoid" id="Q75HZ9"/>
<dbReference type="BRENDA" id="2.5.1.84">
    <property type="organism ID" value="4460"/>
</dbReference>
<dbReference type="PlantReactome" id="R-OSA-1119367">
    <property type="pathway name" value="Polyisoprenoid biosynthesis"/>
</dbReference>
<dbReference type="Proteomes" id="UP000000763">
    <property type="component" value="Chromosome 5"/>
</dbReference>
<dbReference type="Proteomes" id="UP000007752">
    <property type="component" value="Chromosome 5"/>
</dbReference>
<dbReference type="Proteomes" id="UP000059680">
    <property type="component" value="Chromosome 5"/>
</dbReference>
<dbReference type="GO" id="GO:0009507">
    <property type="term" value="C:chloroplast"/>
    <property type="evidence" value="ECO:0000314"/>
    <property type="project" value="UniProtKB"/>
</dbReference>
<dbReference type="GO" id="GO:0009536">
    <property type="term" value="C:plastid"/>
    <property type="evidence" value="ECO:0000314"/>
    <property type="project" value="CACAO"/>
</dbReference>
<dbReference type="GO" id="GO:0004337">
    <property type="term" value="F:(2E,6E)-farnesyl diphosphate synthase activity"/>
    <property type="evidence" value="ECO:0000314"/>
    <property type="project" value="UniProtKB"/>
</dbReference>
<dbReference type="GO" id="GO:0052923">
    <property type="term" value="F:all-trans-nonaprenyl-diphosphate synthase (geranyl-diphosphate specific) activity"/>
    <property type="evidence" value="ECO:0007669"/>
    <property type="project" value="UniProtKB-EC"/>
</dbReference>
<dbReference type="GO" id="GO:0046872">
    <property type="term" value="F:metal ion binding"/>
    <property type="evidence" value="ECO:0007669"/>
    <property type="project" value="UniProtKB-KW"/>
</dbReference>
<dbReference type="GO" id="GO:0004659">
    <property type="term" value="F:prenyltransferase activity"/>
    <property type="evidence" value="ECO:0000318"/>
    <property type="project" value="GO_Central"/>
</dbReference>
<dbReference type="GO" id="GO:0008299">
    <property type="term" value="P:isoprenoid biosynthetic process"/>
    <property type="evidence" value="ECO:0000318"/>
    <property type="project" value="GO_Central"/>
</dbReference>
<dbReference type="GO" id="GO:0010236">
    <property type="term" value="P:plastoquinone biosynthetic process"/>
    <property type="evidence" value="ECO:0000314"/>
    <property type="project" value="UniProtKB"/>
</dbReference>
<dbReference type="CDD" id="cd00685">
    <property type="entry name" value="Trans_IPPS_HT"/>
    <property type="match status" value="1"/>
</dbReference>
<dbReference type="FunFam" id="1.10.600.10:FF:000017">
    <property type="entry name" value="Solanesyl-diphosphate synthase 2, chloroplastic"/>
    <property type="match status" value="1"/>
</dbReference>
<dbReference type="Gene3D" id="1.10.600.10">
    <property type="entry name" value="Farnesyl Diphosphate Synthase"/>
    <property type="match status" value="1"/>
</dbReference>
<dbReference type="InterPro" id="IPR008949">
    <property type="entry name" value="Isoprenoid_synthase_dom_sf"/>
</dbReference>
<dbReference type="InterPro" id="IPR000092">
    <property type="entry name" value="Polyprenyl_synt"/>
</dbReference>
<dbReference type="InterPro" id="IPR033749">
    <property type="entry name" value="Polyprenyl_synt_CS"/>
</dbReference>
<dbReference type="NCBIfam" id="TIGR02749">
    <property type="entry name" value="prenyl_cyano"/>
    <property type="match status" value="1"/>
</dbReference>
<dbReference type="PANTHER" id="PTHR12001:SF69">
    <property type="entry name" value="ALL TRANS-POLYPRENYL-DIPHOSPHATE SYNTHASE PDSS1"/>
    <property type="match status" value="1"/>
</dbReference>
<dbReference type="PANTHER" id="PTHR12001">
    <property type="entry name" value="GERANYLGERANYL PYROPHOSPHATE SYNTHASE"/>
    <property type="match status" value="1"/>
</dbReference>
<dbReference type="Pfam" id="PF00348">
    <property type="entry name" value="polyprenyl_synt"/>
    <property type="match status" value="1"/>
</dbReference>
<dbReference type="SFLD" id="SFLDS00005">
    <property type="entry name" value="Isoprenoid_Synthase_Type_I"/>
    <property type="match status" value="1"/>
</dbReference>
<dbReference type="SUPFAM" id="SSF48576">
    <property type="entry name" value="Terpenoid synthases"/>
    <property type="match status" value="1"/>
</dbReference>
<dbReference type="PROSITE" id="PS00723">
    <property type="entry name" value="POLYPRENYL_SYNTHASE_1"/>
    <property type="match status" value="1"/>
</dbReference>
<dbReference type="PROSITE" id="PS00444">
    <property type="entry name" value="POLYPRENYL_SYNTHASE_2"/>
    <property type="match status" value="1"/>
</dbReference>
<gene>
    <name evidence="8" type="primary">SPS2</name>
    <name evidence="12" type="ordered locus">Os05g0582300</name>
    <name evidence="9" type="ordered locus">LOC_Os05g50550</name>
    <name evidence="11" type="ORF">OJ1651_G11.10</name>
    <name evidence="13" type="ORF">OsJ_19688</name>
    <name evidence="10" type="ORF">OSJNBb0035N21.17</name>
</gene>
<comment type="function">
    <text evidence="6">Involved in providing solanesyl diphosphate for plastoquinone-9 (PQ-9) formation. Geranyl diphosphate is the preferred substrate.</text>
</comment>
<comment type="catalytic activity">
    <reaction evidence="6">
        <text>7 isopentenyl diphosphate + (2E)-geranyl diphosphate = all-trans-nonaprenyl diphosphate + 7 diphosphate</text>
        <dbReference type="Rhea" id="RHEA:27563"/>
        <dbReference type="ChEBI" id="CHEBI:33019"/>
        <dbReference type="ChEBI" id="CHEBI:58057"/>
        <dbReference type="ChEBI" id="CHEBI:58391"/>
        <dbReference type="ChEBI" id="CHEBI:128769"/>
        <dbReference type="EC" id="2.5.1.84"/>
    </reaction>
</comment>
<comment type="cofactor">
    <cofactor evidence="1">
        <name>Mg(2+)</name>
        <dbReference type="ChEBI" id="CHEBI:18420"/>
    </cofactor>
    <text evidence="1">Binds 2 Mg(2+) ions per subunit.</text>
</comment>
<comment type="subunit">
    <text evidence="4 7">Homodimer (By similarity). Interacts with FBN5 (PubMed:28751900).</text>
</comment>
<comment type="subcellular location">
    <subcellularLocation>
        <location evidence="6 7">Plastid</location>
        <location evidence="6 7">Chloroplast</location>
    </subcellularLocation>
</comment>
<comment type="tissue specificity">
    <text evidence="6">Expressed in leaves, stems and roots. Highest expression in leaves and roots.</text>
</comment>
<comment type="similarity">
    <text evidence="9">Belongs to the FPP/GGPP synthase family.</text>
</comment>
<comment type="sequence caution" evidence="9">
    <conflict type="erroneous gene model prediction">
        <sequence resource="EMBL-CDS" id="BAS95534"/>
    </conflict>
</comment>